<comment type="function">
    <text evidence="1">Required for accurate and efficient protein synthesis under certain stress conditions. May act as a fidelity factor of the translation reaction, by catalyzing a one-codon backward translocation of tRNAs on improperly translocated ribosomes. Back-translocation proceeds from a post-translocation (POST) complex to a pre-translocation (PRE) complex, thus giving elongation factor G a second chance to translocate the tRNAs correctly. Binds to ribosomes in a GTP-dependent manner.</text>
</comment>
<comment type="catalytic activity">
    <reaction evidence="1">
        <text>GTP + H2O = GDP + phosphate + H(+)</text>
        <dbReference type="Rhea" id="RHEA:19669"/>
        <dbReference type="ChEBI" id="CHEBI:15377"/>
        <dbReference type="ChEBI" id="CHEBI:15378"/>
        <dbReference type="ChEBI" id="CHEBI:37565"/>
        <dbReference type="ChEBI" id="CHEBI:43474"/>
        <dbReference type="ChEBI" id="CHEBI:58189"/>
        <dbReference type="EC" id="3.6.5.n1"/>
    </reaction>
</comment>
<comment type="subcellular location">
    <subcellularLocation>
        <location evidence="1">Cell inner membrane</location>
        <topology evidence="1">Peripheral membrane protein</topology>
        <orientation evidence="1">Cytoplasmic side</orientation>
    </subcellularLocation>
</comment>
<comment type="similarity">
    <text evidence="1">Belongs to the TRAFAC class translation factor GTPase superfamily. Classic translation factor GTPase family. LepA subfamily.</text>
</comment>
<feature type="chain" id="PRO_0000176289" description="Elongation factor 4">
    <location>
        <begin position="1"/>
        <end position="600"/>
    </location>
</feature>
<feature type="domain" description="tr-type G">
    <location>
        <begin position="6"/>
        <end position="188"/>
    </location>
</feature>
<feature type="binding site" evidence="1">
    <location>
        <begin position="18"/>
        <end position="23"/>
    </location>
    <ligand>
        <name>GTP</name>
        <dbReference type="ChEBI" id="CHEBI:37565"/>
    </ligand>
</feature>
<feature type="binding site" evidence="1">
    <location>
        <begin position="135"/>
        <end position="138"/>
    </location>
    <ligand>
        <name>GTP</name>
        <dbReference type="ChEBI" id="CHEBI:37565"/>
    </ligand>
</feature>
<keyword id="KW-0997">Cell inner membrane</keyword>
<keyword id="KW-1003">Cell membrane</keyword>
<keyword id="KW-0342">GTP-binding</keyword>
<keyword id="KW-0378">Hydrolase</keyword>
<keyword id="KW-0472">Membrane</keyword>
<keyword id="KW-0547">Nucleotide-binding</keyword>
<keyword id="KW-0648">Protein biosynthesis</keyword>
<name>LEPA_LEPIC</name>
<organism>
    <name type="scientific">Leptospira interrogans serogroup Icterohaemorrhagiae serovar copenhageni (strain Fiocruz L1-130)</name>
    <dbReference type="NCBI Taxonomy" id="267671"/>
    <lineage>
        <taxon>Bacteria</taxon>
        <taxon>Pseudomonadati</taxon>
        <taxon>Spirochaetota</taxon>
        <taxon>Spirochaetia</taxon>
        <taxon>Leptospirales</taxon>
        <taxon>Leptospiraceae</taxon>
        <taxon>Leptospira</taxon>
    </lineage>
</organism>
<reference key="1">
    <citation type="journal article" date="2004" name="J. Bacteriol.">
        <title>Comparative genomics of two Leptospira interrogans serovars reveals novel insights into physiology and pathogenesis.</title>
        <authorList>
            <person name="Nascimento A.L.T.O."/>
            <person name="Ko A.I."/>
            <person name="Martins E.A.L."/>
            <person name="Monteiro-Vitorello C.B."/>
            <person name="Ho P.L."/>
            <person name="Haake D.A."/>
            <person name="Verjovski-Almeida S."/>
            <person name="Hartskeerl R.A."/>
            <person name="Marques M.V."/>
            <person name="Oliveira M.C."/>
            <person name="Menck C.F.M."/>
            <person name="Leite L.C.C."/>
            <person name="Carrer H."/>
            <person name="Coutinho L.L."/>
            <person name="Degrave W.M."/>
            <person name="Dellagostin O.A."/>
            <person name="El-Dorry H."/>
            <person name="Ferro E.S."/>
            <person name="Ferro M.I.T."/>
            <person name="Furlan L.R."/>
            <person name="Gamberini M."/>
            <person name="Giglioti E.A."/>
            <person name="Goes-Neto A."/>
            <person name="Goldman G.H."/>
            <person name="Goldman M.H.S."/>
            <person name="Harakava R."/>
            <person name="Jeronimo S.M.B."/>
            <person name="Junqueira-de-Azevedo I.L.M."/>
            <person name="Kimura E.T."/>
            <person name="Kuramae E.E."/>
            <person name="Lemos E.G.M."/>
            <person name="Lemos M.V.F."/>
            <person name="Marino C.L."/>
            <person name="Nunes L.R."/>
            <person name="de Oliveira R.C."/>
            <person name="Pereira G.G."/>
            <person name="Reis M.S."/>
            <person name="Schriefer A."/>
            <person name="Siqueira W.J."/>
            <person name="Sommer P."/>
            <person name="Tsai S.M."/>
            <person name="Simpson A.J.G."/>
            <person name="Ferro J.A."/>
            <person name="Camargo L.E.A."/>
            <person name="Kitajima J.P."/>
            <person name="Setubal J.C."/>
            <person name="Van Sluys M.A."/>
        </authorList>
    </citation>
    <scope>NUCLEOTIDE SEQUENCE [LARGE SCALE GENOMIC DNA]</scope>
    <source>
        <strain>Fiocruz L1-130</strain>
    </source>
</reference>
<evidence type="ECO:0000255" key="1">
    <source>
        <dbReference type="HAMAP-Rule" id="MF_00071"/>
    </source>
</evidence>
<protein>
    <recommendedName>
        <fullName evidence="1">Elongation factor 4</fullName>
        <shortName evidence="1">EF-4</shortName>
        <ecNumber evidence="1">3.6.5.n1</ecNumber>
    </recommendedName>
    <alternativeName>
        <fullName evidence="1">Ribosomal back-translocase LepA</fullName>
    </alternativeName>
</protein>
<accession>Q72QU8</accession>
<dbReference type="EC" id="3.6.5.n1" evidence="1"/>
<dbReference type="EMBL" id="AE016823">
    <property type="protein sequence ID" value="AAS70586.1"/>
    <property type="molecule type" value="Genomic_DNA"/>
</dbReference>
<dbReference type="RefSeq" id="WP_001280999.1">
    <property type="nucleotide sequence ID" value="NC_005823.1"/>
</dbReference>
<dbReference type="SMR" id="Q72QU8"/>
<dbReference type="GeneID" id="61141902"/>
<dbReference type="KEGG" id="lic:LIC_12010"/>
<dbReference type="HOGENOM" id="CLU_009995_3_3_12"/>
<dbReference type="Proteomes" id="UP000007037">
    <property type="component" value="Chromosome I"/>
</dbReference>
<dbReference type="GO" id="GO:0005886">
    <property type="term" value="C:plasma membrane"/>
    <property type="evidence" value="ECO:0007669"/>
    <property type="project" value="UniProtKB-SubCell"/>
</dbReference>
<dbReference type="GO" id="GO:0005525">
    <property type="term" value="F:GTP binding"/>
    <property type="evidence" value="ECO:0007669"/>
    <property type="project" value="UniProtKB-UniRule"/>
</dbReference>
<dbReference type="GO" id="GO:0003924">
    <property type="term" value="F:GTPase activity"/>
    <property type="evidence" value="ECO:0007669"/>
    <property type="project" value="UniProtKB-UniRule"/>
</dbReference>
<dbReference type="GO" id="GO:0043022">
    <property type="term" value="F:ribosome binding"/>
    <property type="evidence" value="ECO:0007669"/>
    <property type="project" value="UniProtKB-UniRule"/>
</dbReference>
<dbReference type="GO" id="GO:0003746">
    <property type="term" value="F:translation elongation factor activity"/>
    <property type="evidence" value="ECO:0007669"/>
    <property type="project" value="UniProtKB-UniRule"/>
</dbReference>
<dbReference type="GO" id="GO:0045727">
    <property type="term" value="P:positive regulation of translation"/>
    <property type="evidence" value="ECO:0007669"/>
    <property type="project" value="UniProtKB-UniRule"/>
</dbReference>
<dbReference type="CDD" id="cd03699">
    <property type="entry name" value="EF4_II"/>
    <property type="match status" value="1"/>
</dbReference>
<dbReference type="CDD" id="cd16260">
    <property type="entry name" value="EF4_III"/>
    <property type="match status" value="1"/>
</dbReference>
<dbReference type="CDD" id="cd01890">
    <property type="entry name" value="LepA"/>
    <property type="match status" value="1"/>
</dbReference>
<dbReference type="CDD" id="cd03709">
    <property type="entry name" value="lepA_C"/>
    <property type="match status" value="1"/>
</dbReference>
<dbReference type="FunFam" id="3.40.50.300:FF:000078">
    <property type="entry name" value="Elongation factor 4"/>
    <property type="match status" value="1"/>
</dbReference>
<dbReference type="FunFam" id="2.40.30.10:FF:000015">
    <property type="entry name" value="Translation factor GUF1, mitochondrial"/>
    <property type="match status" value="1"/>
</dbReference>
<dbReference type="FunFam" id="3.30.70.240:FF:000007">
    <property type="entry name" value="Translation factor GUF1, mitochondrial"/>
    <property type="match status" value="1"/>
</dbReference>
<dbReference type="FunFam" id="3.30.70.2570:FF:000001">
    <property type="entry name" value="Translation factor GUF1, mitochondrial"/>
    <property type="match status" value="1"/>
</dbReference>
<dbReference type="FunFam" id="3.30.70.870:FF:000004">
    <property type="entry name" value="Translation factor GUF1, mitochondrial"/>
    <property type="match status" value="1"/>
</dbReference>
<dbReference type="Gene3D" id="3.30.70.240">
    <property type="match status" value="1"/>
</dbReference>
<dbReference type="Gene3D" id="3.30.70.2570">
    <property type="entry name" value="Elongation factor 4, C-terminal domain"/>
    <property type="match status" value="1"/>
</dbReference>
<dbReference type="Gene3D" id="3.30.70.870">
    <property type="entry name" value="Elongation Factor G (Translational Gtpase), domain 3"/>
    <property type="match status" value="1"/>
</dbReference>
<dbReference type="Gene3D" id="3.40.50.300">
    <property type="entry name" value="P-loop containing nucleotide triphosphate hydrolases"/>
    <property type="match status" value="1"/>
</dbReference>
<dbReference type="Gene3D" id="2.40.30.10">
    <property type="entry name" value="Translation factors"/>
    <property type="match status" value="1"/>
</dbReference>
<dbReference type="HAMAP" id="MF_00071">
    <property type="entry name" value="LepA"/>
    <property type="match status" value="1"/>
</dbReference>
<dbReference type="InterPro" id="IPR006297">
    <property type="entry name" value="EF-4"/>
</dbReference>
<dbReference type="InterPro" id="IPR035647">
    <property type="entry name" value="EFG_III/V"/>
</dbReference>
<dbReference type="InterPro" id="IPR000640">
    <property type="entry name" value="EFG_V-like"/>
</dbReference>
<dbReference type="InterPro" id="IPR004161">
    <property type="entry name" value="EFTu-like_2"/>
</dbReference>
<dbReference type="InterPro" id="IPR031157">
    <property type="entry name" value="G_TR_CS"/>
</dbReference>
<dbReference type="InterPro" id="IPR038363">
    <property type="entry name" value="LepA_C_sf"/>
</dbReference>
<dbReference type="InterPro" id="IPR013842">
    <property type="entry name" value="LepA_CTD"/>
</dbReference>
<dbReference type="InterPro" id="IPR035654">
    <property type="entry name" value="LepA_IV"/>
</dbReference>
<dbReference type="InterPro" id="IPR027417">
    <property type="entry name" value="P-loop_NTPase"/>
</dbReference>
<dbReference type="InterPro" id="IPR005225">
    <property type="entry name" value="Small_GTP-bd"/>
</dbReference>
<dbReference type="InterPro" id="IPR000795">
    <property type="entry name" value="T_Tr_GTP-bd_dom"/>
</dbReference>
<dbReference type="InterPro" id="IPR009000">
    <property type="entry name" value="Transl_B-barrel_sf"/>
</dbReference>
<dbReference type="NCBIfam" id="TIGR01393">
    <property type="entry name" value="lepA"/>
    <property type="match status" value="1"/>
</dbReference>
<dbReference type="NCBIfam" id="TIGR00231">
    <property type="entry name" value="small_GTP"/>
    <property type="match status" value="1"/>
</dbReference>
<dbReference type="PANTHER" id="PTHR43512:SF4">
    <property type="entry name" value="TRANSLATION FACTOR GUF1 HOMOLOG, CHLOROPLASTIC"/>
    <property type="match status" value="1"/>
</dbReference>
<dbReference type="PANTHER" id="PTHR43512">
    <property type="entry name" value="TRANSLATION FACTOR GUF1-RELATED"/>
    <property type="match status" value="1"/>
</dbReference>
<dbReference type="Pfam" id="PF00679">
    <property type="entry name" value="EFG_C"/>
    <property type="match status" value="1"/>
</dbReference>
<dbReference type="Pfam" id="PF00009">
    <property type="entry name" value="GTP_EFTU"/>
    <property type="match status" value="1"/>
</dbReference>
<dbReference type="Pfam" id="PF03144">
    <property type="entry name" value="GTP_EFTU_D2"/>
    <property type="match status" value="1"/>
</dbReference>
<dbReference type="Pfam" id="PF06421">
    <property type="entry name" value="LepA_C"/>
    <property type="match status" value="1"/>
</dbReference>
<dbReference type="PRINTS" id="PR00315">
    <property type="entry name" value="ELONGATNFCT"/>
</dbReference>
<dbReference type="SMART" id="SM00838">
    <property type="entry name" value="EFG_C"/>
    <property type="match status" value="1"/>
</dbReference>
<dbReference type="SUPFAM" id="SSF54980">
    <property type="entry name" value="EF-G C-terminal domain-like"/>
    <property type="match status" value="2"/>
</dbReference>
<dbReference type="SUPFAM" id="SSF52540">
    <property type="entry name" value="P-loop containing nucleoside triphosphate hydrolases"/>
    <property type="match status" value="1"/>
</dbReference>
<dbReference type="SUPFAM" id="SSF50447">
    <property type="entry name" value="Translation proteins"/>
    <property type="match status" value="1"/>
</dbReference>
<dbReference type="PROSITE" id="PS00301">
    <property type="entry name" value="G_TR_1"/>
    <property type="match status" value="1"/>
</dbReference>
<dbReference type="PROSITE" id="PS51722">
    <property type="entry name" value="G_TR_2"/>
    <property type="match status" value="1"/>
</dbReference>
<gene>
    <name evidence="1" type="primary">lepA</name>
    <name type="ordered locus">LIC_12010</name>
</gene>
<sequence>MSDKQQFIRNFSIIAHIDHGKSTLADRLLEIGQVTNDRTKKDQILDSMDIERERGITIKANNATFDYLAEDGNTYIMNLLDTPGHVDFTYEVSRSLKACEGVLLIVDASQGVEAQTLANLYLAMEQDLEILPVMNKIDLPAADVEKTKIQIEESLGLDPQKAVAISAKTGLNVKEVLEQITKQIPSPKGNSNAPLKALVYDSYFDPYMGVVIKIRIFDGRIKKGDRILMMSTGKDFTVNEVGINRINLTPKESLETGEVGYIIAGIKKVSDAKTGDTVTLFSNPTKESVPGYKEAKPMVFAGLFPINGEQFDELVDAIEKLKLNDAALVFEKESSIALGFGFRVGYLGLLHMEIVQERLEREFNLDLITTAPSVKYIIRSKNGEVEEIDNPSRFPEPITIESTEEPYVKATVITPNEYVGNIMSLAMDKRGIQLDTVYLTQDKVQLTYEIPLAELIFEFYDKLKSFTRGYASLDYEPSGYKASQLVKMDILVNGEPVDALSMIVHRSKAEQRGREIIEKLKDLIPRHQFMIPLQAAVGGKILARESISALRKNVTAKCYGGDITRKKKLLEKQKEGKKRMKQIGNVEIPQEAFLAVLKTS</sequence>
<proteinExistence type="inferred from homology"/>